<comment type="function">
    <text evidence="1">Globally modulates RNA abundance by binding to RNase E (Rne) and regulating its endonucleolytic activity. Can modulate Rne action in a substrate-dependent manner by altering the composition of the degradosome. Modulates RNA-binding and helicase activities of the degradosome.</text>
</comment>
<comment type="subunit">
    <text evidence="1">Homotrimer. Binds to both RNA-binding sites in the C-terminal region of Rne and to RhlB.</text>
</comment>
<comment type="subcellular location">
    <subcellularLocation>
        <location evidence="1">Cytoplasm</location>
    </subcellularLocation>
</comment>
<comment type="similarity">
    <text evidence="1">Belongs to the RraA family.</text>
</comment>
<accession>A1JI06</accession>
<dbReference type="EMBL" id="AM286415">
    <property type="protein sequence ID" value="CAL10244.1"/>
    <property type="molecule type" value="Genomic_DNA"/>
</dbReference>
<dbReference type="RefSeq" id="WP_004714419.1">
    <property type="nucleotide sequence ID" value="NC_008800.1"/>
</dbReference>
<dbReference type="RefSeq" id="YP_001004496.1">
    <property type="nucleotide sequence ID" value="NC_008800.1"/>
</dbReference>
<dbReference type="SMR" id="A1JI06"/>
<dbReference type="GeneID" id="97458256"/>
<dbReference type="KEGG" id="yen:YE0102"/>
<dbReference type="PATRIC" id="fig|393305.7.peg.192"/>
<dbReference type="eggNOG" id="COG0684">
    <property type="taxonomic scope" value="Bacteria"/>
</dbReference>
<dbReference type="HOGENOM" id="CLU_072626_4_0_6"/>
<dbReference type="OrthoDB" id="943692at2"/>
<dbReference type="Proteomes" id="UP000000642">
    <property type="component" value="Chromosome"/>
</dbReference>
<dbReference type="GO" id="GO:0005829">
    <property type="term" value="C:cytosol"/>
    <property type="evidence" value="ECO:0007669"/>
    <property type="project" value="TreeGrafter"/>
</dbReference>
<dbReference type="GO" id="GO:0060698">
    <property type="term" value="F:endoribonuclease inhibitor activity"/>
    <property type="evidence" value="ECO:0007669"/>
    <property type="project" value="UniProtKB-UniRule"/>
</dbReference>
<dbReference type="GO" id="GO:0019899">
    <property type="term" value="F:enzyme binding"/>
    <property type="evidence" value="ECO:0007669"/>
    <property type="project" value="UniProtKB-UniRule"/>
</dbReference>
<dbReference type="GO" id="GO:1902369">
    <property type="term" value="P:negative regulation of RNA catabolic process"/>
    <property type="evidence" value="ECO:0007669"/>
    <property type="project" value="TreeGrafter"/>
</dbReference>
<dbReference type="CDD" id="cd16841">
    <property type="entry name" value="RraA_family"/>
    <property type="match status" value="1"/>
</dbReference>
<dbReference type="Gene3D" id="3.50.30.40">
    <property type="entry name" value="Ribonuclease E inhibitor RraA/RraA-like"/>
    <property type="match status" value="1"/>
</dbReference>
<dbReference type="HAMAP" id="MF_00471">
    <property type="entry name" value="RraA"/>
    <property type="match status" value="1"/>
</dbReference>
<dbReference type="InterPro" id="IPR010203">
    <property type="entry name" value="RraA"/>
</dbReference>
<dbReference type="InterPro" id="IPR005493">
    <property type="entry name" value="RraA/RraA-like"/>
</dbReference>
<dbReference type="InterPro" id="IPR036704">
    <property type="entry name" value="RraA/RraA-like_sf"/>
</dbReference>
<dbReference type="InterPro" id="IPR014339">
    <property type="entry name" value="RraA_gpbac"/>
</dbReference>
<dbReference type="NCBIfam" id="TIGR01935">
    <property type="entry name" value="NOT-MenG"/>
    <property type="match status" value="1"/>
</dbReference>
<dbReference type="NCBIfam" id="NF006875">
    <property type="entry name" value="PRK09372.1"/>
    <property type="match status" value="1"/>
</dbReference>
<dbReference type="NCBIfam" id="TIGR02998">
    <property type="entry name" value="RraA_entero"/>
    <property type="match status" value="1"/>
</dbReference>
<dbReference type="PANTHER" id="PTHR33254">
    <property type="entry name" value="4-HYDROXY-4-METHYL-2-OXOGLUTARATE ALDOLASE 3-RELATED"/>
    <property type="match status" value="1"/>
</dbReference>
<dbReference type="PANTHER" id="PTHR33254:SF29">
    <property type="entry name" value="REGULATOR OF RIBONUCLEASE ACTIVITY A"/>
    <property type="match status" value="1"/>
</dbReference>
<dbReference type="Pfam" id="PF03737">
    <property type="entry name" value="RraA-like"/>
    <property type="match status" value="1"/>
</dbReference>
<dbReference type="SUPFAM" id="SSF89562">
    <property type="entry name" value="RraA-like"/>
    <property type="match status" value="1"/>
</dbReference>
<gene>
    <name evidence="1" type="primary">rraA</name>
    <name type="ordered locus">YE0102</name>
</gene>
<name>RRAA_YERE8</name>
<evidence type="ECO:0000255" key="1">
    <source>
        <dbReference type="HAMAP-Rule" id="MF_00471"/>
    </source>
</evidence>
<sequence length="161" mass="17343">MKYDTSDLCDIYHEEVNVVEPLFSNFGGRTSFGGKITTVKCFEDNGLLFDLLEENGLGRVLVVDGGGSVRRALINAELADLALKNEWEGIVVYGAVRQVDELAELDIGIQAMAAIPVGAADEGIGESDIRVNFGGVTFFSGDHLYADNTGIILSEEPLDIE</sequence>
<protein>
    <recommendedName>
        <fullName evidence="1">Regulator of ribonuclease activity A</fullName>
    </recommendedName>
</protein>
<keyword id="KW-0963">Cytoplasm</keyword>
<proteinExistence type="inferred from homology"/>
<organism>
    <name type="scientific">Yersinia enterocolitica serotype O:8 / biotype 1B (strain NCTC 13174 / 8081)</name>
    <dbReference type="NCBI Taxonomy" id="393305"/>
    <lineage>
        <taxon>Bacteria</taxon>
        <taxon>Pseudomonadati</taxon>
        <taxon>Pseudomonadota</taxon>
        <taxon>Gammaproteobacteria</taxon>
        <taxon>Enterobacterales</taxon>
        <taxon>Yersiniaceae</taxon>
        <taxon>Yersinia</taxon>
    </lineage>
</organism>
<feature type="chain" id="PRO_1000013881" description="Regulator of ribonuclease activity A">
    <location>
        <begin position="1"/>
        <end position="161"/>
    </location>
</feature>
<reference key="1">
    <citation type="journal article" date="2006" name="PLoS Genet.">
        <title>The complete genome sequence and comparative genome analysis of the high pathogenicity Yersinia enterocolitica strain 8081.</title>
        <authorList>
            <person name="Thomson N.R."/>
            <person name="Howard S."/>
            <person name="Wren B.W."/>
            <person name="Holden M.T.G."/>
            <person name="Crossman L."/>
            <person name="Challis G.L."/>
            <person name="Churcher C."/>
            <person name="Mungall K."/>
            <person name="Brooks K."/>
            <person name="Chillingworth T."/>
            <person name="Feltwell T."/>
            <person name="Abdellah Z."/>
            <person name="Hauser H."/>
            <person name="Jagels K."/>
            <person name="Maddison M."/>
            <person name="Moule S."/>
            <person name="Sanders M."/>
            <person name="Whitehead S."/>
            <person name="Quail M.A."/>
            <person name="Dougan G."/>
            <person name="Parkhill J."/>
            <person name="Prentice M.B."/>
        </authorList>
    </citation>
    <scope>NUCLEOTIDE SEQUENCE [LARGE SCALE GENOMIC DNA]</scope>
    <source>
        <strain>NCTC 13174 / 8081</strain>
    </source>
</reference>